<feature type="chain" id="PRO_0000048177" description="Tubulin alpha-4 chain">
    <location>
        <begin position="1"/>
        <end position="450"/>
    </location>
</feature>
<feature type="region of interest" description="Disordered" evidence="3">
    <location>
        <begin position="431"/>
        <end position="450"/>
    </location>
</feature>
<feature type="active site" evidence="2">
    <location>
        <position position="254"/>
    </location>
</feature>
<feature type="binding site" evidence="2">
    <location>
        <position position="11"/>
    </location>
    <ligand>
        <name>GTP</name>
        <dbReference type="ChEBI" id="CHEBI:37565"/>
    </ligand>
</feature>
<feature type="binding site" evidence="2">
    <location>
        <position position="71"/>
    </location>
    <ligand>
        <name>GTP</name>
        <dbReference type="ChEBI" id="CHEBI:37565"/>
    </ligand>
</feature>
<feature type="binding site" evidence="2">
    <location>
        <position position="71"/>
    </location>
    <ligand>
        <name>Mg(2+)</name>
        <dbReference type="ChEBI" id="CHEBI:18420"/>
    </ligand>
</feature>
<feature type="binding site" evidence="2">
    <location>
        <position position="144"/>
    </location>
    <ligand>
        <name>GTP</name>
        <dbReference type="ChEBI" id="CHEBI:37565"/>
    </ligand>
</feature>
<feature type="binding site" evidence="2">
    <location>
        <position position="145"/>
    </location>
    <ligand>
        <name>GTP</name>
        <dbReference type="ChEBI" id="CHEBI:37565"/>
    </ligand>
</feature>
<feature type="binding site" evidence="2">
    <location>
        <position position="179"/>
    </location>
    <ligand>
        <name>GTP</name>
        <dbReference type="ChEBI" id="CHEBI:37565"/>
    </ligand>
</feature>
<feature type="binding site" evidence="2">
    <location>
        <position position="206"/>
    </location>
    <ligand>
        <name>GTP</name>
        <dbReference type="ChEBI" id="CHEBI:37565"/>
    </ligand>
</feature>
<feature type="binding site" evidence="2">
    <location>
        <position position="228"/>
    </location>
    <ligand>
        <name>GTP</name>
        <dbReference type="ChEBI" id="CHEBI:37565"/>
    </ligand>
</feature>
<feature type="site" description="Involved in polymerization" evidence="1">
    <location>
        <position position="450"/>
    </location>
</feature>
<feature type="modified residue" description="N6-acetyllysine" evidence="1">
    <location>
        <position position="40"/>
    </location>
</feature>
<organism>
    <name type="scientific">Gossypium hirsutum</name>
    <name type="common">Upland cotton</name>
    <name type="synonym">Gossypium mexicanum</name>
    <dbReference type="NCBI Taxonomy" id="3635"/>
    <lineage>
        <taxon>Eukaryota</taxon>
        <taxon>Viridiplantae</taxon>
        <taxon>Streptophyta</taxon>
        <taxon>Embryophyta</taxon>
        <taxon>Tracheophyta</taxon>
        <taxon>Spermatophyta</taxon>
        <taxon>Magnoliopsida</taxon>
        <taxon>eudicotyledons</taxon>
        <taxon>Gunneridae</taxon>
        <taxon>Pentapetalae</taxon>
        <taxon>rosids</taxon>
        <taxon>malvids</taxon>
        <taxon>Malvales</taxon>
        <taxon>Malvaceae</taxon>
        <taxon>Malvoideae</taxon>
        <taxon>Gossypium</taxon>
    </lineage>
</organism>
<name>TBA4_GOSHI</name>
<evidence type="ECO:0000250" key="1"/>
<evidence type="ECO:0000250" key="2">
    <source>
        <dbReference type="UniProtKB" id="P68363"/>
    </source>
</evidence>
<evidence type="ECO:0000256" key="3">
    <source>
        <dbReference type="SAM" id="MobiDB-lite"/>
    </source>
</evidence>
<evidence type="ECO:0000305" key="4"/>
<dbReference type="EC" id="3.6.5.-" evidence="2"/>
<dbReference type="EMBL" id="AY345605">
    <property type="protein sequence ID" value="AAQ92663.1"/>
    <property type="molecule type" value="mRNA"/>
</dbReference>
<dbReference type="SMR" id="Q6VAF9"/>
<dbReference type="STRING" id="3635.Q6VAF9"/>
<dbReference type="PaxDb" id="3635-Q6VAF9"/>
<dbReference type="Proteomes" id="UP000189702">
    <property type="component" value="Unplaced"/>
</dbReference>
<dbReference type="GO" id="GO:0005737">
    <property type="term" value="C:cytoplasm"/>
    <property type="evidence" value="ECO:0000318"/>
    <property type="project" value="GO_Central"/>
</dbReference>
<dbReference type="GO" id="GO:0005874">
    <property type="term" value="C:microtubule"/>
    <property type="evidence" value="ECO:0000318"/>
    <property type="project" value="GO_Central"/>
</dbReference>
<dbReference type="GO" id="GO:0005525">
    <property type="term" value="F:GTP binding"/>
    <property type="evidence" value="ECO:0000318"/>
    <property type="project" value="GO_Central"/>
</dbReference>
<dbReference type="GO" id="GO:0016787">
    <property type="term" value="F:hydrolase activity"/>
    <property type="evidence" value="ECO:0007669"/>
    <property type="project" value="UniProtKB-KW"/>
</dbReference>
<dbReference type="GO" id="GO:0046872">
    <property type="term" value="F:metal ion binding"/>
    <property type="evidence" value="ECO:0007669"/>
    <property type="project" value="UniProtKB-KW"/>
</dbReference>
<dbReference type="GO" id="GO:0005200">
    <property type="term" value="F:structural constituent of cytoskeleton"/>
    <property type="evidence" value="ECO:0000318"/>
    <property type="project" value="GO_Central"/>
</dbReference>
<dbReference type="GO" id="GO:0000226">
    <property type="term" value="P:microtubule cytoskeleton organization"/>
    <property type="evidence" value="ECO:0000318"/>
    <property type="project" value="GO_Central"/>
</dbReference>
<dbReference type="GO" id="GO:0000278">
    <property type="term" value="P:mitotic cell cycle"/>
    <property type="evidence" value="ECO:0000318"/>
    <property type="project" value="GO_Central"/>
</dbReference>
<dbReference type="CDD" id="cd02186">
    <property type="entry name" value="alpha_tubulin"/>
    <property type="match status" value="1"/>
</dbReference>
<dbReference type="FunFam" id="1.10.287.600:FF:000005">
    <property type="entry name" value="Tubulin alpha chain"/>
    <property type="match status" value="1"/>
</dbReference>
<dbReference type="FunFam" id="3.30.1330.20:FF:000001">
    <property type="entry name" value="Tubulin alpha chain"/>
    <property type="match status" value="1"/>
</dbReference>
<dbReference type="FunFam" id="3.40.50.1440:FF:000004">
    <property type="entry name" value="Tubulin alpha chain"/>
    <property type="match status" value="1"/>
</dbReference>
<dbReference type="Gene3D" id="1.10.287.600">
    <property type="entry name" value="Helix hairpin bin"/>
    <property type="match status" value="1"/>
</dbReference>
<dbReference type="Gene3D" id="3.30.1330.20">
    <property type="entry name" value="Tubulin/FtsZ, C-terminal domain"/>
    <property type="match status" value="1"/>
</dbReference>
<dbReference type="Gene3D" id="3.40.50.1440">
    <property type="entry name" value="Tubulin/FtsZ, GTPase domain"/>
    <property type="match status" value="1"/>
</dbReference>
<dbReference type="InterPro" id="IPR002452">
    <property type="entry name" value="Alpha_tubulin"/>
</dbReference>
<dbReference type="InterPro" id="IPR008280">
    <property type="entry name" value="Tub_FtsZ_C"/>
</dbReference>
<dbReference type="InterPro" id="IPR000217">
    <property type="entry name" value="Tubulin"/>
</dbReference>
<dbReference type="InterPro" id="IPR037103">
    <property type="entry name" value="Tubulin/FtsZ-like_C"/>
</dbReference>
<dbReference type="InterPro" id="IPR018316">
    <property type="entry name" value="Tubulin/FtsZ_2-layer-sand-dom"/>
</dbReference>
<dbReference type="InterPro" id="IPR036525">
    <property type="entry name" value="Tubulin/FtsZ_GTPase_sf"/>
</dbReference>
<dbReference type="InterPro" id="IPR023123">
    <property type="entry name" value="Tubulin_C"/>
</dbReference>
<dbReference type="InterPro" id="IPR017975">
    <property type="entry name" value="Tubulin_CS"/>
</dbReference>
<dbReference type="InterPro" id="IPR003008">
    <property type="entry name" value="Tubulin_FtsZ_GTPase"/>
</dbReference>
<dbReference type="PANTHER" id="PTHR11588">
    <property type="entry name" value="TUBULIN"/>
    <property type="match status" value="1"/>
</dbReference>
<dbReference type="Pfam" id="PF00091">
    <property type="entry name" value="Tubulin"/>
    <property type="match status" value="1"/>
</dbReference>
<dbReference type="Pfam" id="PF03953">
    <property type="entry name" value="Tubulin_C"/>
    <property type="match status" value="1"/>
</dbReference>
<dbReference type="PRINTS" id="PR01162">
    <property type="entry name" value="ALPHATUBULIN"/>
</dbReference>
<dbReference type="PRINTS" id="PR01161">
    <property type="entry name" value="TUBULIN"/>
</dbReference>
<dbReference type="SMART" id="SM00864">
    <property type="entry name" value="Tubulin"/>
    <property type="match status" value="1"/>
</dbReference>
<dbReference type="SMART" id="SM00865">
    <property type="entry name" value="Tubulin_C"/>
    <property type="match status" value="1"/>
</dbReference>
<dbReference type="SUPFAM" id="SSF55307">
    <property type="entry name" value="Tubulin C-terminal domain-like"/>
    <property type="match status" value="1"/>
</dbReference>
<dbReference type="SUPFAM" id="SSF52490">
    <property type="entry name" value="Tubulin nucleotide-binding domain-like"/>
    <property type="match status" value="1"/>
</dbReference>
<dbReference type="PROSITE" id="PS00227">
    <property type="entry name" value="TUBULIN"/>
    <property type="match status" value="1"/>
</dbReference>
<accession>Q6VAF9</accession>
<sequence>MRECISIHIGQAGIQVGNACWELYCLEHGIQPDGQMPSDKTVGGGDDAFNTFFSETGAGKHVPRAVFVDLEPTVIDEVRTGAYRQLFHPEQLISGKEDAANNFARGHYTIGKEIVDLCLDRIRKLADNCTGLQGFLVFNAVGGGTGSGLGSLLLERLSVDYGKKSKLGFTVYPSPQVSTSVVEPYNSVLSTHSLLEHTDVAVLLDNEAIYDICRRSLDIERPTYTNLNRLVSQVISSLTASLRFDGALNVDVTEFQTNLVPYPRIHFMLSSYAPVISAEKAYHEQLSVAEITNSAFEPSSMMAKCDPRHGKYMACCLMYRGDVVPKDVNAAVATIKTKRTIQFVDWCPTGFKCGINYQPPTVVPGGDLAKVQRAVCMISNSTSVAEVFSRIDHKFDLMYTKRAFVHWYVGEGMEEGEFSEAREDLAALEKDYEEVGAESGEGDEGDEEEY</sequence>
<comment type="function">
    <text>Tubulin is the major constituent of microtubules, a cylinder consisting of laterally associated linear protofilaments composed of alpha- and beta-tubulin heterodimers. Microtubules grow by the addition of GTP-tubulin dimers to the microtubule end, where a stabilizing cap forms. Below the cap, tubulin dimers are in GDP-bound state, owing to GTPase activity of alpha-tubulin.</text>
</comment>
<comment type="catalytic activity">
    <reaction evidence="2">
        <text>GTP + H2O = GDP + phosphate + H(+)</text>
        <dbReference type="Rhea" id="RHEA:19669"/>
        <dbReference type="ChEBI" id="CHEBI:15377"/>
        <dbReference type="ChEBI" id="CHEBI:15378"/>
        <dbReference type="ChEBI" id="CHEBI:37565"/>
        <dbReference type="ChEBI" id="CHEBI:43474"/>
        <dbReference type="ChEBI" id="CHEBI:58189"/>
    </reaction>
    <physiologicalReaction direction="left-to-right" evidence="2">
        <dbReference type="Rhea" id="RHEA:19670"/>
    </physiologicalReaction>
</comment>
<comment type="cofactor">
    <cofactor evidence="2">
        <name>Mg(2+)</name>
        <dbReference type="ChEBI" id="CHEBI:18420"/>
    </cofactor>
</comment>
<comment type="subunit">
    <text>Dimer of alpha and beta chains. A typical microtubule is a hollow water-filled tube with an outer diameter of 25 nm and an inner diameter of 15 nM. Alpha-beta heterodimers associate head-to-tail to form protofilaments running lengthwise along the microtubule wall with the beta-tubulin subunit facing the microtubule plus end conferring a structural polarity. Microtubules usually have 13 protofilaments but different protofilament numbers can be found in some organisms and specialized cells.</text>
</comment>
<comment type="subcellular location">
    <subcellularLocation>
        <location>Cytoplasm</location>
        <location>Cytoskeleton</location>
    </subcellularLocation>
</comment>
<comment type="PTM">
    <text evidence="1">Undergoes a tyrosination/detyrosination cycle, the cyclic removal and re-addition of a C-terminal tyrosine residue by the enzymes tubulin tyrosine carboxypeptidase (TTCP) and tubulin tyrosine ligase (TTL), respectively.</text>
</comment>
<comment type="PTM">
    <text evidence="1">Acetylation of alpha chains at Lys-40 stabilizes microtubules and affects affinity and processivity of microtubule motors. This modification has a role in multiple cellular functions, ranging from cell motility, cell cycle progression or cell differentiation to intracellular trafficking and signaling (By similarity).</text>
</comment>
<comment type="similarity">
    <text evidence="4">Belongs to the tubulin family.</text>
</comment>
<reference key="1">
    <citation type="submission" date="2003-07" db="EMBL/GenBank/DDBJ databases">
        <title>Cloning and expression of nine tubulin genes from elongating cotton fiber cells.</title>
        <authorList>
            <person name="Feng J.-X."/>
            <person name="Wei G."/>
            <person name="Wang L."/>
            <person name="Ji S.-J."/>
            <person name="Zhang T.-Z."/>
            <person name="Zhu Y.-X."/>
        </authorList>
    </citation>
    <scope>NUCLEOTIDE SEQUENCE [MRNA]</scope>
</reference>
<proteinExistence type="evidence at transcript level"/>
<keyword id="KW-0007">Acetylation</keyword>
<keyword id="KW-0963">Cytoplasm</keyword>
<keyword id="KW-0206">Cytoskeleton</keyword>
<keyword id="KW-0342">GTP-binding</keyword>
<keyword id="KW-0378">Hydrolase</keyword>
<keyword id="KW-0460">Magnesium</keyword>
<keyword id="KW-0479">Metal-binding</keyword>
<keyword id="KW-0493">Microtubule</keyword>
<keyword id="KW-0547">Nucleotide-binding</keyword>
<keyword id="KW-1185">Reference proteome</keyword>
<protein>
    <recommendedName>
        <fullName>Tubulin alpha-4 chain</fullName>
        <ecNumber evidence="2">3.6.5.-</ecNumber>
    </recommendedName>
    <alternativeName>
        <fullName>Alpha-4-tubulin</fullName>
    </alternativeName>
</protein>